<keyword id="KW-0997">Cell inner membrane</keyword>
<keyword id="KW-1003">Cell membrane</keyword>
<keyword id="KW-0285">Flavoprotein</keyword>
<keyword id="KW-0288">FMN</keyword>
<keyword id="KW-0472">Membrane</keyword>
<keyword id="KW-0560">Oxidoreductase</keyword>
<proteinExistence type="inferred from homology"/>
<protein>
    <recommendedName>
        <fullName evidence="1">L-lactate dehydrogenase</fullName>
        <ecNumber evidence="1">1.1.-.-</ecNumber>
    </recommendedName>
</protein>
<gene>
    <name evidence="1" type="primary">lldD</name>
    <name type="ordered locus">YPTB1578</name>
</gene>
<sequence length="381" mass="41259">MIISASTDYRAAAQRKLPPFLFHYIDGGAYNEQTLRRNTADLADIALRQRVLKNMSELSLETQLFGETQAMPVVLGPVGLSGMYARRGEVQAARAADKKGIPFTLSTLSVCPIEEVAPAIARPMWFQLYVLKDRGFMRNALTRAQAAGVKTLVFTVDMPVPGARYRDAHSGMSGPNAAARRLLQAIAHPQWAWDVGLNGKPHDLGNISAYLGKPTTLEDYMGWIATNFDPSISWKDLEWVREFWQGPMIIKGILDPEDAKDAVKFGADGIVVSNHGGRQLDGVLSTARALPAIADAVKGDITILADSGIRTGLDVVRMIALGADSVLLGRAFVYALATAGEAGVINLLTLIEQEMRVAMTLTGAKRIADINRDSLAVSERG</sequence>
<evidence type="ECO:0000255" key="1">
    <source>
        <dbReference type="HAMAP-Rule" id="MF_01559"/>
    </source>
</evidence>
<dbReference type="EC" id="1.1.-.-" evidence="1"/>
<dbReference type="EMBL" id="BX936398">
    <property type="protein sequence ID" value="CAH20817.1"/>
    <property type="molecule type" value="Genomic_DNA"/>
</dbReference>
<dbReference type="RefSeq" id="WP_002211919.1">
    <property type="nucleotide sequence ID" value="NZ_CP009712.1"/>
</dbReference>
<dbReference type="SMR" id="Q66C32"/>
<dbReference type="GeneID" id="57977002"/>
<dbReference type="KEGG" id="ypo:BZ17_934"/>
<dbReference type="KEGG" id="yps:YPTB1578"/>
<dbReference type="PATRIC" id="fig|273123.14.peg.989"/>
<dbReference type="Proteomes" id="UP000001011">
    <property type="component" value="Chromosome"/>
</dbReference>
<dbReference type="GO" id="GO:0005886">
    <property type="term" value="C:plasma membrane"/>
    <property type="evidence" value="ECO:0007669"/>
    <property type="project" value="UniProtKB-SubCell"/>
</dbReference>
<dbReference type="GO" id="GO:0010181">
    <property type="term" value="F:FMN binding"/>
    <property type="evidence" value="ECO:0007669"/>
    <property type="project" value="InterPro"/>
</dbReference>
<dbReference type="GO" id="GO:0004459">
    <property type="term" value="F:L-lactate dehydrogenase activity"/>
    <property type="evidence" value="ECO:0007669"/>
    <property type="project" value="UniProtKB-UniRule"/>
</dbReference>
<dbReference type="GO" id="GO:0009060">
    <property type="term" value="P:aerobic respiration"/>
    <property type="evidence" value="ECO:0007669"/>
    <property type="project" value="TreeGrafter"/>
</dbReference>
<dbReference type="GO" id="GO:0006089">
    <property type="term" value="P:lactate metabolic process"/>
    <property type="evidence" value="ECO:0007669"/>
    <property type="project" value="UniProtKB-UniRule"/>
</dbReference>
<dbReference type="CDD" id="cd02809">
    <property type="entry name" value="alpha_hydroxyacid_oxid_FMN"/>
    <property type="match status" value="1"/>
</dbReference>
<dbReference type="FunFam" id="3.20.20.70:FF:000029">
    <property type="entry name" value="L-lactate dehydrogenase"/>
    <property type="match status" value="1"/>
</dbReference>
<dbReference type="Gene3D" id="3.20.20.70">
    <property type="entry name" value="Aldolase class I"/>
    <property type="match status" value="1"/>
</dbReference>
<dbReference type="HAMAP" id="MF_01559">
    <property type="entry name" value="L_lact_dehydr"/>
    <property type="match status" value="1"/>
</dbReference>
<dbReference type="InterPro" id="IPR013785">
    <property type="entry name" value="Aldolase_TIM"/>
</dbReference>
<dbReference type="InterPro" id="IPR012133">
    <property type="entry name" value="Alpha-hydoxy_acid_DH_FMN"/>
</dbReference>
<dbReference type="InterPro" id="IPR000262">
    <property type="entry name" value="FMN-dep_DH"/>
</dbReference>
<dbReference type="InterPro" id="IPR037396">
    <property type="entry name" value="FMN_HAD"/>
</dbReference>
<dbReference type="InterPro" id="IPR008259">
    <property type="entry name" value="FMN_hydac_DH_AS"/>
</dbReference>
<dbReference type="InterPro" id="IPR020920">
    <property type="entry name" value="LldD"/>
</dbReference>
<dbReference type="NCBIfam" id="NF033901">
    <property type="entry name" value="L_lactate_LldD"/>
    <property type="match status" value="1"/>
</dbReference>
<dbReference type="NCBIfam" id="NF008398">
    <property type="entry name" value="PRK11197.1"/>
    <property type="match status" value="1"/>
</dbReference>
<dbReference type="PANTHER" id="PTHR10578:SF85">
    <property type="entry name" value="L-LACTATE DEHYDROGENASE"/>
    <property type="match status" value="1"/>
</dbReference>
<dbReference type="PANTHER" id="PTHR10578">
    <property type="entry name" value="S -2-HYDROXY-ACID OXIDASE-RELATED"/>
    <property type="match status" value="1"/>
</dbReference>
<dbReference type="Pfam" id="PF01070">
    <property type="entry name" value="FMN_dh"/>
    <property type="match status" value="1"/>
</dbReference>
<dbReference type="PIRSF" id="PIRSF000138">
    <property type="entry name" value="Al-hdrx_acd_dh"/>
    <property type="match status" value="1"/>
</dbReference>
<dbReference type="SUPFAM" id="SSF51395">
    <property type="entry name" value="FMN-linked oxidoreductases"/>
    <property type="match status" value="1"/>
</dbReference>
<dbReference type="PROSITE" id="PS00557">
    <property type="entry name" value="FMN_HYDROXY_ACID_DH_1"/>
    <property type="match status" value="1"/>
</dbReference>
<dbReference type="PROSITE" id="PS51349">
    <property type="entry name" value="FMN_HYDROXY_ACID_DH_2"/>
    <property type="match status" value="1"/>
</dbReference>
<comment type="function">
    <text evidence="1">Catalyzes the conversion of L-lactate to pyruvate. Is coupled to the respiratory chain.</text>
</comment>
<comment type="catalytic activity">
    <reaction evidence="1">
        <text>(S)-lactate + A = pyruvate + AH2</text>
        <dbReference type="Rhea" id="RHEA:45816"/>
        <dbReference type="ChEBI" id="CHEBI:13193"/>
        <dbReference type="ChEBI" id="CHEBI:15361"/>
        <dbReference type="ChEBI" id="CHEBI:16651"/>
        <dbReference type="ChEBI" id="CHEBI:17499"/>
    </reaction>
</comment>
<comment type="cofactor">
    <cofactor evidence="1">
        <name>FMN</name>
        <dbReference type="ChEBI" id="CHEBI:58210"/>
    </cofactor>
</comment>
<comment type="subcellular location">
    <subcellularLocation>
        <location evidence="1">Cell inner membrane</location>
        <topology evidence="1">Peripheral membrane protein</topology>
    </subcellularLocation>
</comment>
<comment type="similarity">
    <text evidence="1">Belongs to the FMN-dependent alpha-hydroxy acid dehydrogenase family.</text>
</comment>
<feature type="chain" id="PRO_0000206360" description="L-lactate dehydrogenase">
    <location>
        <begin position="1"/>
        <end position="381"/>
    </location>
</feature>
<feature type="domain" description="FMN hydroxy acid dehydrogenase" evidence="1">
    <location>
        <begin position="1"/>
        <end position="380"/>
    </location>
</feature>
<feature type="active site" description="Proton acceptor" evidence="1">
    <location>
        <position position="275"/>
    </location>
</feature>
<feature type="binding site" evidence="1">
    <location>
        <position position="24"/>
    </location>
    <ligand>
        <name>substrate</name>
    </ligand>
</feature>
<feature type="binding site" evidence="1">
    <location>
        <position position="106"/>
    </location>
    <ligand>
        <name>FMN</name>
        <dbReference type="ChEBI" id="CHEBI:58210"/>
    </ligand>
</feature>
<feature type="binding site" evidence="1">
    <location>
        <position position="127"/>
    </location>
    <ligand>
        <name>FMN</name>
        <dbReference type="ChEBI" id="CHEBI:58210"/>
    </ligand>
</feature>
<feature type="binding site" evidence="1">
    <location>
        <position position="129"/>
    </location>
    <ligand>
        <name>substrate</name>
    </ligand>
</feature>
<feature type="binding site" evidence="1">
    <location>
        <position position="155"/>
    </location>
    <ligand>
        <name>FMN</name>
        <dbReference type="ChEBI" id="CHEBI:58210"/>
    </ligand>
</feature>
<feature type="binding site" evidence="1">
    <location>
        <position position="164"/>
    </location>
    <ligand>
        <name>substrate</name>
    </ligand>
</feature>
<feature type="binding site" evidence="1">
    <location>
        <position position="251"/>
    </location>
    <ligand>
        <name>FMN</name>
        <dbReference type="ChEBI" id="CHEBI:58210"/>
    </ligand>
</feature>
<feature type="binding site" evidence="1">
    <location>
        <position position="278"/>
    </location>
    <ligand>
        <name>substrate</name>
    </ligand>
</feature>
<feature type="binding site" evidence="1">
    <location>
        <begin position="306"/>
        <end position="330"/>
    </location>
    <ligand>
        <name>FMN</name>
        <dbReference type="ChEBI" id="CHEBI:58210"/>
    </ligand>
</feature>
<accession>Q66C32</accession>
<name>LLDD_YERPS</name>
<reference key="1">
    <citation type="journal article" date="2004" name="Proc. Natl. Acad. Sci. U.S.A.">
        <title>Insights into the evolution of Yersinia pestis through whole-genome comparison with Yersinia pseudotuberculosis.</title>
        <authorList>
            <person name="Chain P.S.G."/>
            <person name="Carniel E."/>
            <person name="Larimer F.W."/>
            <person name="Lamerdin J."/>
            <person name="Stoutland P.O."/>
            <person name="Regala W.M."/>
            <person name="Georgescu A.M."/>
            <person name="Vergez L.M."/>
            <person name="Land M.L."/>
            <person name="Motin V.L."/>
            <person name="Brubaker R.R."/>
            <person name="Fowler J."/>
            <person name="Hinnebusch J."/>
            <person name="Marceau M."/>
            <person name="Medigue C."/>
            <person name="Simonet M."/>
            <person name="Chenal-Francisque V."/>
            <person name="Souza B."/>
            <person name="Dacheux D."/>
            <person name="Elliott J.M."/>
            <person name="Derbise A."/>
            <person name="Hauser L.J."/>
            <person name="Garcia E."/>
        </authorList>
    </citation>
    <scope>NUCLEOTIDE SEQUENCE [LARGE SCALE GENOMIC DNA]</scope>
    <source>
        <strain>IP32953</strain>
    </source>
</reference>
<organism>
    <name type="scientific">Yersinia pseudotuberculosis serotype I (strain IP32953)</name>
    <dbReference type="NCBI Taxonomy" id="273123"/>
    <lineage>
        <taxon>Bacteria</taxon>
        <taxon>Pseudomonadati</taxon>
        <taxon>Pseudomonadota</taxon>
        <taxon>Gammaproteobacteria</taxon>
        <taxon>Enterobacterales</taxon>
        <taxon>Yersiniaceae</taxon>
        <taxon>Yersinia</taxon>
    </lineage>
</organism>